<sequence length="355" mass="40174">MFDKIEELEIRYQELESLLAVPTVIANQPEFRKLSREHNDLTGLVEAYRRYKKVLAEIEGNRELLADPEMKEMAEAELEDLERQQEELEGEIKLLLLPKDPNDDRNVILEIRAGTGGDESALFAGDLFRMYSRFAERNRWKVEVMSASESERGGFKEVVALIEGQAVFAKLKYESGTHRVQRVPETEAQGRIHTSACTVAVLPEAEDIEIDINPVDLKIDVYRASGAGGQHVNKTESAVRITHLPTGIVVECQDERSQIKNRSKAMKVLKSRILDGLQQEQNARIAADRKQQVGSGDRSERIRTYNFPQGRMTDHRIGLTLYRLDALMEGDIAEVVDSLRAHYQMEALKAQAEAA</sequence>
<reference key="1">
    <citation type="journal article" date="2009" name="BMC Microbiol.">
        <title>The genome sequence of Geobacter metallireducens: features of metabolism, physiology and regulation common and dissimilar to Geobacter sulfurreducens.</title>
        <authorList>
            <person name="Aklujkar M."/>
            <person name="Krushkal J."/>
            <person name="DiBartolo G."/>
            <person name="Lapidus A."/>
            <person name="Land M.L."/>
            <person name="Lovley D.R."/>
        </authorList>
    </citation>
    <scope>NUCLEOTIDE SEQUENCE [LARGE SCALE GENOMIC DNA]</scope>
    <source>
        <strain>ATCC 53774 / DSM 7210 / GS-15</strain>
    </source>
</reference>
<comment type="function">
    <text evidence="1">Peptide chain release factor 1 directs the termination of translation in response to the peptide chain termination codons UAG and UAA.</text>
</comment>
<comment type="subcellular location">
    <subcellularLocation>
        <location evidence="1">Cytoplasm</location>
    </subcellularLocation>
</comment>
<comment type="PTM">
    <text evidence="1">Methylated by PrmC. Methylation increases the termination efficiency of RF1.</text>
</comment>
<comment type="similarity">
    <text evidence="1">Belongs to the prokaryotic/mitochondrial release factor family.</text>
</comment>
<organism>
    <name type="scientific">Geobacter metallireducens (strain ATCC 53774 / DSM 7210 / GS-15)</name>
    <dbReference type="NCBI Taxonomy" id="269799"/>
    <lineage>
        <taxon>Bacteria</taxon>
        <taxon>Pseudomonadati</taxon>
        <taxon>Thermodesulfobacteriota</taxon>
        <taxon>Desulfuromonadia</taxon>
        <taxon>Geobacterales</taxon>
        <taxon>Geobacteraceae</taxon>
        <taxon>Geobacter</taxon>
    </lineage>
</organism>
<evidence type="ECO:0000255" key="1">
    <source>
        <dbReference type="HAMAP-Rule" id="MF_00093"/>
    </source>
</evidence>
<feature type="chain" id="PRO_0000263279" description="Peptide chain release factor 1">
    <location>
        <begin position="1"/>
        <end position="355"/>
    </location>
</feature>
<feature type="modified residue" description="N5-methylglutamine" evidence="1">
    <location>
        <position position="230"/>
    </location>
</feature>
<accession>Q39YQ1</accession>
<name>RF1_GEOMG</name>
<dbReference type="EMBL" id="CP000148">
    <property type="protein sequence ID" value="ABB30623.1"/>
    <property type="molecule type" value="Genomic_DNA"/>
</dbReference>
<dbReference type="RefSeq" id="WP_004512352.1">
    <property type="nucleotide sequence ID" value="NC_007517.1"/>
</dbReference>
<dbReference type="SMR" id="Q39YQ1"/>
<dbReference type="STRING" id="269799.Gmet_0380"/>
<dbReference type="KEGG" id="gme:Gmet_0380"/>
<dbReference type="eggNOG" id="COG0216">
    <property type="taxonomic scope" value="Bacteria"/>
</dbReference>
<dbReference type="HOGENOM" id="CLU_036856_0_1_7"/>
<dbReference type="Proteomes" id="UP000007073">
    <property type="component" value="Chromosome"/>
</dbReference>
<dbReference type="GO" id="GO:0005737">
    <property type="term" value="C:cytoplasm"/>
    <property type="evidence" value="ECO:0007669"/>
    <property type="project" value="UniProtKB-SubCell"/>
</dbReference>
<dbReference type="GO" id="GO:0016149">
    <property type="term" value="F:translation release factor activity, codon specific"/>
    <property type="evidence" value="ECO:0007669"/>
    <property type="project" value="UniProtKB-UniRule"/>
</dbReference>
<dbReference type="FunFam" id="3.30.160.20:FF:000004">
    <property type="entry name" value="Peptide chain release factor 1"/>
    <property type="match status" value="1"/>
</dbReference>
<dbReference type="FunFam" id="3.30.70.1660:FF:000002">
    <property type="entry name" value="Peptide chain release factor 1"/>
    <property type="match status" value="1"/>
</dbReference>
<dbReference type="FunFam" id="3.30.70.1660:FF:000004">
    <property type="entry name" value="Peptide chain release factor 1"/>
    <property type="match status" value="1"/>
</dbReference>
<dbReference type="Gene3D" id="3.30.160.20">
    <property type="match status" value="1"/>
</dbReference>
<dbReference type="Gene3D" id="3.30.70.1660">
    <property type="match status" value="2"/>
</dbReference>
<dbReference type="Gene3D" id="6.10.140.1950">
    <property type="match status" value="1"/>
</dbReference>
<dbReference type="HAMAP" id="MF_00093">
    <property type="entry name" value="Rel_fac_1"/>
    <property type="match status" value="1"/>
</dbReference>
<dbReference type="InterPro" id="IPR005139">
    <property type="entry name" value="PCRF"/>
</dbReference>
<dbReference type="InterPro" id="IPR000352">
    <property type="entry name" value="Pep_chain_release_fac_I"/>
</dbReference>
<dbReference type="InterPro" id="IPR045853">
    <property type="entry name" value="Pep_chain_release_fac_I_sf"/>
</dbReference>
<dbReference type="InterPro" id="IPR050057">
    <property type="entry name" value="Prokaryotic/Mito_RF"/>
</dbReference>
<dbReference type="InterPro" id="IPR004373">
    <property type="entry name" value="RF-1"/>
</dbReference>
<dbReference type="NCBIfam" id="TIGR00019">
    <property type="entry name" value="prfA"/>
    <property type="match status" value="1"/>
</dbReference>
<dbReference type="NCBIfam" id="NF001859">
    <property type="entry name" value="PRK00591.1"/>
    <property type="match status" value="1"/>
</dbReference>
<dbReference type="PANTHER" id="PTHR43804">
    <property type="entry name" value="LD18447P"/>
    <property type="match status" value="1"/>
</dbReference>
<dbReference type="PANTHER" id="PTHR43804:SF7">
    <property type="entry name" value="LD18447P"/>
    <property type="match status" value="1"/>
</dbReference>
<dbReference type="Pfam" id="PF03462">
    <property type="entry name" value="PCRF"/>
    <property type="match status" value="1"/>
</dbReference>
<dbReference type="Pfam" id="PF00472">
    <property type="entry name" value="RF-1"/>
    <property type="match status" value="1"/>
</dbReference>
<dbReference type="SMART" id="SM00937">
    <property type="entry name" value="PCRF"/>
    <property type="match status" value="1"/>
</dbReference>
<dbReference type="SUPFAM" id="SSF75620">
    <property type="entry name" value="Release factor"/>
    <property type="match status" value="1"/>
</dbReference>
<dbReference type="PROSITE" id="PS00745">
    <property type="entry name" value="RF_PROK_I"/>
    <property type="match status" value="1"/>
</dbReference>
<protein>
    <recommendedName>
        <fullName evidence="1">Peptide chain release factor 1</fullName>
        <shortName evidence="1">RF-1</shortName>
    </recommendedName>
</protein>
<proteinExistence type="inferred from homology"/>
<keyword id="KW-0963">Cytoplasm</keyword>
<keyword id="KW-0488">Methylation</keyword>
<keyword id="KW-0648">Protein biosynthesis</keyword>
<keyword id="KW-1185">Reference proteome</keyword>
<gene>
    <name evidence="1" type="primary">prfA</name>
    <name type="ordered locus">Gmet_0380</name>
</gene>